<comment type="function">
    <text evidence="1">Catalyzes the reduction of the glycolytic intermediate dihydroxyacetone phosphate (DHAP) to sn-glycerol 3-phosphate (G3P), the key precursor for phospholipid synthesis.</text>
</comment>
<comment type="catalytic activity">
    <reaction evidence="1">
        <text>sn-glycerol 3-phosphate + NAD(+) = dihydroxyacetone phosphate + NADH + H(+)</text>
        <dbReference type="Rhea" id="RHEA:11092"/>
        <dbReference type="ChEBI" id="CHEBI:15378"/>
        <dbReference type="ChEBI" id="CHEBI:57540"/>
        <dbReference type="ChEBI" id="CHEBI:57597"/>
        <dbReference type="ChEBI" id="CHEBI:57642"/>
        <dbReference type="ChEBI" id="CHEBI:57945"/>
        <dbReference type="EC" id="1.1.1.94"/>
    </reaction>
    <physiologicalReaction direction="right-to-left" evidence="1">
        <dbReference type="Rhea" id="RHEA:11094"/>
    </physiologicalReaction>
</comment>
<comment type="catalytic activity">
    <reaction evidence="1">
        <text>sn-glycerol 3-phosphate + NADP(+) = dihydroxyacetone phosphate + NADPH + H(+)</text>
        <dbReference type="Rhea" id="RHEA:11096"/>
        <dbReference type="ChEBI" id="CHEBI:15378"/>
        <dbReference type="ChEBI" id="CHEBI:57597"/>
        <dbReference type="ChEBI" id="CHEBI:57642"/>
        <dbReference type="ChEBI" id="CHEBI:57783"/>
        <dbReference type="ChEBI" id="CHEBI:58349"/>
        <dbReference type="EC" id="1.1.1.94"/>
    </reaction>
    <physiologicalReaction direction="right-to-left" evidence="1">
        <dbReference type="Rhea" id="RHEA:11098"/>
    </physiologicalReaction>
</comment>
<comment type="pathway">
    <text evidence="1">Membrane lipid metabolism; glycerophospholipid metabolism.</text>
</comment>
<comment type="subcellular location">
    <subcellularLocation>
        <location evidence="1">Cytoplasm</location>
    </subcellularLocation>
</comment>
<comment type="similarity">
    <text evidence="1">Belongs to the NAD-dependent glycerol-3-phosphate dehydrogenase family.</text>
</comment>
<name>GPDA_SALPB</name>
<dbReference type="EC" id="1.1.1.94" evidence="1"/>
<dbReference type="EMBL" id="CP000886">
    <property type="protein sequence ID" value="ABX69910.1"/>
    <property type="molecule type" value="Genomic_DNA"/>
</dbReference>
<dbReference type="RefSeq" id="WP_001076596.1">
    <property type="nucleotide sequence ID" value="NC_010102.1"/>
</dbReference>
<dbReference type="SMR" id="A9MVK2"/>
<dbReference type="KEGG" id="spq:SPAB_04597"/>
<dbReference type="PATRIC" id="fig|1016998.12.peg.4323"/>
<dbReference type="HOGENOM" id="CLU_033449_0_2_6"/>
<dbReference type="BioCyc" id="SENT1016998:SPAB_RS18695-MONOMER"/>
<dbReference type="UniPathway" id="UPA00940"/>
<dbReference type="Proteomes" id="UP000008556">
    <property type="component" value="Chromosome"/>
</dbReference>
<dbReference type="GO" id="GO:0005829">
    <property type="term" value="C:cytosol"/>
    <property type="evidence" value="ECO:0007669"/>
    <property type="project" value="TreeGrafter"/>
</dbReference>
<dbReference type="GO" id="GO:0047952">
    <property type="term" value="F:glycerol-3-phosphate dehydrogenase [NAD(P)+] activity"/>
    <property type="evidence" value="ECO:0007669"/>
    <property type="project" value="UniProtKB-UniRule"/>
</dbReference>
<dbReference type="GO" id="GO:0051287">
    <property type="term" value="F:NAD binding"/>
    <property type="evidence" value="ECO:0007669"/>
    <property type="project" value="InterPro"/>
</dbReference>
<dbReference type="GO" id="GO:0005975">
    <property type="term" value="P:carbohydrate metabolic process"/>
    <property type="evidence" value="ECO:0007669"/>
    <property type="project" value="InterPro"/>
</dbReference>
<dbReference type="GO" id="GO:0046167">
    <property type="term" value="P:glycerol-3-phosphate biosynthetic process"/>
    <property type="evidence" value="ECO:0007669"/>
    <property type="project" value="UniProtKB-UniRule"/>
</dbReference>
<dbReference type="GO" id="GO:0046168">
    <property type="term" value="P:glycerol-3-phosphate catabolic process"/>
    <property type="evidence" value="ECO:0007669"/>
    <property type="project" value="InterPro"/>
</dbReference>
<dbReference type="GO" id="GO:0046474">
    <property type="term" value="P:glycerophospholipid biosynthetic process"/>
    <property type="evidence" value="ECO:0007669"/>
    <property type="project" value="TreeGrafter"/>
</dbReference>
<dbReference type="FunFam" id="1.10.1040.10:FF:000001">
    <property type="entry name" value="Glycerol-3-phosphate dehydrogenase [NAD(P)+]"/>
    <property type="match status" value="1"/>
</dbReference>
<dbReference type="FunFam" id="3.40.50.720:FF:000019">
    <property type="entry name" value="Glycerol-3-phosphate dehydrogenase [NAD(P)+]"/>
    <property type="match status" value="1"/>
</dbReference>
<dbReference type="Gene3D" id="1.10.1040.10">
    <property type="entry name" value="N-(1-d-carboxylethyl)-l-norvaline Dehydrogenase, domain 2"/>
    <property type="match status" value="1"/>
</dbReference>
<dbReference type="Gene3D" id="3.40.50.720">
    <property type="entry name" value="NAD(P)-binding Rossmann-like Domain"/>
    <property type="match status" value="1"/>
</dbReference>
<dbReference type="HAMAP" id="MF_00394">
    <property type="entry name" value="NAD_Glyc3P_dehydrog"/>
    <property type="match status" value="1"/>
</dbReference>
<dbReference type="InterPro" id="IPR008927">
    <property type="entry name" value="6-PGluconate_DH-like_C_sf"/>
</dbReference>
<dbReference type="InterPro" id="IPR013328">
    <property type="entry name" value="6PGD_dom2"/>
</dbReference>
<dbReference type="InterPro" id="IPR006168">
    <property type="entry name" value="G3P_DH_NAD-dep"/>
</dbReference>
<dbReference type="InterPro" id="IPR006109">
    <property type="entry name" value="G3P_DH_NAD-dep_C"/>
</dbReference>
<dbReference type="InterPro" id="IPR011128">
    <property type="entry name" value="G3P_DH_NAD-dep_N"/>
</dbReference>
<dbReference type="InterPro" id="IPR036291">
    <property type="entry name" value="NAD(P)-bd_dom_sf"/>
</dbReference>
<dbReference type="NCBIfam" id="NF000939">
    <property type="entry name" value="PRK00094.1-1"/>
    <property type="match status" value="1"/>
</dbReference>
<dbReference type="NCBIfam" id="NF000940">
    <property type="entry name" value="PRK00094.1-2"/>
    <property type="match status" value="1"/>
</dbReference>
<dbReference type="NCBIfam" id="NF000942">
    <property type="entry name" value="PRK00094.1-4"/>
    <property type="match status" value="1"/>
</dbReference>
<dbReference type="PANTHER" id="PTHR11728">
    <property type="entry name" value="GLYCEROL-3-PHOSPHATE DEHYDROGENASE"/>
    <property type="match status" value="1"/>
</dbReference>
<dbReference type="PANTHER" id="PTHR11728:SF1">
    <property type="entry name" value="GLYCEROL-3-PHOSPHATE DEHYDROGENASE [NAD(+)] 2, CHLOROPLASTIC"/>
    <property type="match status" value="1"/>
</dbReference>
<dbReference type="Pfam" id="PF07479">
    <property type="entry name" value="NAD_Gly3P_dh_C"/>
    <property type="match status" value="1"/>
</dbReference>
<dbReference type="Pfam" id="PF01210">
    <property type="entry name" value="NAD_Gly3P_dh_N"/>
    <property type="match status" value="1"/>
</dbReference>
<dbReference type="PIRSF" id="PIRSF000114">
    <property type="entry name" value="Glycerol-3-P_dh"/>
    <property type="match status" value="1"/>
</dbReference>
<dbReference type="PRINTS" id="PR00077">
    <property type="entry name" value="GPDHDRGNASE"/>
</dbReference>
<dbReference type="SUPFAM" id="SSF48179">
    <property type="entry name" value="6-phosphogluconate dehydrogenase C-terminal domain-like"/>
    <property type="match status" value="1"/>
</dbReference>
<dbReference type="SUPFAM" id="SSF51735">
    <property type="entry name" value="NAD(P)-binding Rossmann-fold domains"/>
    <property type="match status" value="1"/>
</dbReference>
<dbReference type="PROSITE" id="PS00957">
    <property type="entry name" value="NAD_G3PDH"/>
    <property type="match status" value="1"/>
</dbReference>
<evidence type="ECO:0000255" key="1">
    <source>
        <dbReference type="HAMAP-Rule" id="MF_00394"/>
    </source>
</evidence>
<gene>
    <name evidence="1" type="primary">gpsA</name>
    <name type="ordered locus">SPAB_04597</name>
</gene>
<sequence>MNQSNASMTVIGAGSYGTALAITLARNGHQVVLWGHDPKHIATLEHDRCNVAFLPDVPFPDTLHLESDLATALAASRNILVVVPSHVFSDVLRQIKPLMRPDARLVWATKGLEAETGRLLQDVAREALGDQIPLAVISGPTFAKELAAGLPTAISLASTDETFADDLQQLLHCGKSFRVYINADFIGVQLGGAVKNVIAIGAGMSDGIGFGANARTALITRGLTEMSRLGAALGADPATFMGMAGLGDLVLTCTDNQSRNRRFGMMLGQGMDVKGAQDKIGQVVEGYRNTKEVRELAHRFGVEMPITEEIYQVLYCGKNAREAALTLLGRARKEELSRH</sequence>
<proteinExistence type="inferred from homology"/>
<protein>
    <recommendedName>
        <fullName evidence="1">Glycerol-3-phosphate dehydrogenase [NAD(P)+]</fullName>
        <ecNumber evidence="1">1.1.1.94</ecNumber>
    </recommendedName>
    <alternativeName>
        <fullName evidence="1">NAD(P)(+)-dependent glycerol-3-phosphate dehydrogenase</fullName>
    </alternativeName>
    <alternativeName>
        <fullName evidence="1">NAD(P)H-dependent dihydroxyacetone-phosphate reductase</fullName>
    </alternativeName>
</protein>
<reference key="1">
    <citation type="submission" date="2007-11" db="EMBL/GenBank/DDBJ databases">
        <authorList>
            <consortium name="The Salmonella enterica serovar Paratyphi B Genome Sequencing Project"/>
            <person name="McClelland M."/>
            <person name="Sanderson E.K."/>
            <person name="Porwollik S."/>
            <person name="Spieth J."/>
            <person name="Clifton W.S."/>
            <person name="Fulton R."/>
            <person name="Cordes M."/>
            <person name="Wollam A."/>
            <person name="Shah N."/>
            <person name="Pepin K."/>
            <person name="Bhonagiri V."/>
            <person name="Nash W."/>
            <person name="Johnson M."/>
            <person name="Thiruvilangam P."/>
            <person name="Wilson R."/>
        </authorList>
    </citation>
    <scope>NUCLEOTIDE SEQUENCE [LARGE SCALE GENOMIC DNA]</scope>
    <source>
        <strain>ATCC BAA-1250 / SPB7</strain>
    </source>
</reference>
<organism>
    <name type="scientific">Salmonella paratyphi B (strain ATCC BAA-1250 / SPB7)</name>
    <dbReference type="NCBI Taxonomy" id="1016998"/>
    <lineage>
        <taxon>Bacteria</taxon>
        <taxon>Pseudomonadati</taxon>
        <taxon>Pseudomonadota</taxon>
        <taxon>Gammaproteobacteria</taxon>
        <taxon>Enterobacterales</taxon>
        <taxon>Enterobacteriaceae</taxon>
        <taxon>Salmonella</taxon>
    </lineage>
</organism>
<accession>A9MVK2</accession>
<feature type="chain" id="PRO_1000080315" description="Glycerol-3-phosphate dehydrogenase [NAD(P)+]">
    <location>
        <begin position="1"/>
        <end position="339"/>
    </location>
</feature>
<feature type="active site" description="Proton acceptor" evidence="1">
    <location>
        <position position="195"/>
    </location>
</feature>
<feature type="binding site" evidence="1">
    <location>
        <position position="15"/>
    </location>
    <ligand>
        <name>NADPH</name>
        <dbReference type="ChEBI" id="CHEBI:57783"/>
    </ligand>
</feature>
<feature type="binding site" evidence="1">
    <location>
        <position position="16"/>
    </location>
    <ligand>
        <name>NADPH</name>
        <dbReference type="ChEBI" id="CHEBI:57783"/>
    </ligand>
</feature>
<feature type="binding site" evidence="1">
    <location>
        <position position="36"/>
    </location>
    <ligand>
        <name>NADPH</name>
        <dbReference type="ChEBI" id="CHEBI:57783"/>
    </ligand>
</feature>
<feature type="binding site" evidence="1">
    <location>
        <position position="110"/>
    </location>
    <ligand>
        <name>NADPH</name>
        <dbReference type="ChEBI" id="CHEBI:57783"/>
    </ligand>
</feature>
<feature type="binding site" evidence="1">
    <location>
        <position position="110"/>
    </location>
    <ligand>
        <name>sn-glycerol 3-phosphate</name>
        <dbReference type="ChEBI" id="CHEBI:57597"/>
    </ligand>
</feature>
<feature type="binding site" evidence="1">
    <location>
        <position position="139"/>
    </location>
    <ligand>
        <name>sn-glycerol 3-phosphate</name>
        <dbReference type="ChEBI" id="CHEBI:57597"/>
    </ligand>
</feature>
<feature type="binding site" evidence="1">
    <location>
        <position position="141"/>
    </location>
    <ligand>
        <name>sn-glycerol 3-phosphate</name>
        <dbReference type="ChEBI" id="CHEBI:57597"/>
    </ligand>
</feature>
<feature type="binding site" evidence="1">
    <location>
        <position position="143"/>
    </location>
    <ligand>
        <name>NADPH</name>
        <dbReference type="ChEBI" id="CHEBI:57783"/>
    </ligand>
</feature>
<feature type="binding site" evidence="1">
    <location>
        <position position="195"/>
    </location>
    <ligand>
        <name>sn-glycerol 3-phosphate</name>
        <dbReference type="ChEBI" id="CHEBI:57597"/>
    </ligand>
</feature>
<feature type="binding site" evidence="1">
    <location>
        <position position="248"/>
    </location>
    <ligand>
        <name>sn-glycerol 3-phosphate</name>
        <dbReference type="ChEBI" id="CHEBI:57597"/>
    </ligand>
</feature>
<feature type="binding site" evidence="1">
    <location>
        <position position="258"/>
    </location>
    <ligand>
        <name>sn-glycerol 3-phosphate</name>
        <dbReference type="ChEBI" id="CHEBI:57597"/>
    </ligand>
</feature>
<feature type="binding site" evidence="1">
    <location>
        <position position="259"/>
    </location>
    <ligand>
        <name>NADPH</name>
        <dbReference type="ChEBI" id="CHEBI:57783"/>
    </ligand>
</feature>
<feature type="binding site" evidence="1">
    <location>
        <position position="259"/>
    </location>
    <ligand>
        <name>sn-glycerol 3-phosphate</name>
        <dbReference type="ChEBI" id="CHEBI:57597"/>
    </ligand>
</feature>
<feature type="binding site" evidence="1">
    <location>
        <position position="260"/>
    </location>
    <ligand>
        <name>sn-glycerol 3-phosphate</name>
        <dbReference type="ChEBI" id="CHEBI:57597"/>
    </ligand>
</feature>
<feature type="binding site" evidence="1">
    <location>
        <position position="283"/>
    </location>
    <ligand>
        <name>NADPH</name>
        <dbReference type="ChEBI" id="CHEBI:57783"/>
    </ligand>
</feature>
<feature type="binding site" evidence="1">
    <location>
        <position position="285"/>
    </location>
    <ligand>
        <name>NADPH</name>
        <dbReference type="ChEBI" id="CHEBI:57783"/>
    </ligand>
</feature>
<keyword id="KW-0963">Cytoplasm</keyword>
<keyword id="KW-0444">Lipid biosynthesis</keyword>
<keyword id="KW-0443">Lipid metabolism</keyword>
<keyword id="KW-0520">NAD</keyword>
<keyword id="KW-0521">NADP</keyword>
<keyword id="KW-0547">Nucleotide-binding</keyword>
<keyword id="KW-0560">Oxidoreductase</keyword>
<keyword id="KW-0594">Phospholipid biosynthesis</keyword>
<keyword id="KW-1208">Phospholipid metabolism</keyword>